<keyword id="KW-0687">Ribonucleoprotein</keyword>
<keyword id="KW-0689">Ribosomal protein</keyword>
<keyword id="KW-0694">RNA-binding</keyword>
<keyword id="KW-0699">rRNA-binding</keyword>
<proteinExistence type="inferred from homology"/>
<name>RL4_ECO8A</name>
<dbReference type="EMBL" id="CU928160">
    <property type="protein sequence ID" value="CAR00270.1"/>
    <property type="molecule type" value="Genomic_DNA"/>
</dbReference>
<dbReference type="RefSeq" id="WP_000424395.1">
    <property type="nucleotide sequence ID" value="NC_011741.1"/>
</dbReference>
<dbReference type="SMR" id="B7M1N3"/>
<dbReference type="GeneID" id="97442859"/>
<dbReference type="KEGG" id="ecr:ECIAI1_3468"/>
<dbReference type="HOGENOM" id="CLU_041575_5_2_6"/>
<dbReference type="GO" id="GO:1990904">
    <property type="term" value="C:ribonucleoprotein complex"/>
    <property type="evidence" value="ECO:0007669"/>
    <property type="project" value="UniProtKB-KW"/>
</dbReference>
<dbReference type="GO" id="GO:0005840">
    <property type="term" value="C:ribosome"/>
    <property type="evidence" value="ECO:0007669"/>
    <property type="project" value="UniProtKB-KW"/>
</dbReference>
<dbReference type="GO" id="GO:0019843">
    <property type="term" value="F:rRNA binding"/>
    <property type="evidence" value="ECO:0007669"/>
    <property type="project" value="UniProtKB-UniRule"/>
</dbReference>
<dbReference type="GO" id="GO:0003735">
    <property type="term" value="F:structural constituent of ribosome"/>
    <property type="evidence" value="ECO:0007669"/>
    <property type="project" value="InterPro"/>
</dbReference>
<dbReference type="GO" id="GO:0006412">
    <property type="term" value="P:translation"/>
    <property type="evidence" value="ECO:0007669"/>
    <property type="project" value="UniProtKB-UniRule"/>
</dbReference>
<dbReference type="FunFam" id="3.40.1370.10:FF:000001">
    <property type="entry name" value="50S ribosomal protein L4"/>
    <property type="match status" value="1"/>
</dbReference>
<dbReference type="Gene3D" id="3.40.1370.10">
    <property type="match status" value="1"/>
</dbReference>
<dbReference type="HAMAP" id="MF_01328_B">
    <property type="entry name" value="Ribosomal_uL4_B"/>
    <property type="match status" value="1"/>
</dbReference>
<dbReference type="InterPro" id="IPR002136">
    <property type="entry name" value="Ribosomal_uL4"/>
</dbReference>
<dbReference type="InterPro" id="IPR013005">
    <property type="entry name" value="Ribosomal_uL4-like"/>
</dbReference>
<dbReference type="InterPro" id="IPR023574">
    <property type="entry name" value="Ribosomal_uL4_dom_sf"/>
</dbReference>
<dbReference type="NCBIfam" id="TIGR03953">
    <property type="entry name" value="rplD_bact"/>
    <property type="match status" value="1"/>
</dbReference>
<dbReference type="PANTHER" id="PTHR10746">
    <property type="entry name" value="50S RIBOSOMAL PROTEIN L4"/>
    <property type="match status" value="1"/>
</dbReference>
<dbReference type="PANTHER" id="PTHR10746:SF6">
    <property type="entry name" value="LARGE RIBOSOMAL SUBUNIT PROTEIN UL4M"/>
    <property type="match status" value="1"/>
</dbReference>
<dbReference type="Pfam" id="PF00573">
    <property type="entry name" value="Ribosomal_L4"/>
    <property type="match status" value="1"/>
</dbReference>
<dbReference type="SUPFAM" id="SSF52166">
    <property type="entry name" value="Ribosomal protein L4"/>
    <property type="match status" value="1"/>
</dbReference>
<protein>
    <recommendedName>
        <fullName evidence="1">Large ribosomal subunit protein uL4</fullName>
    </recommendedName>
    <alternativeName>
        <fullName evidence="3">50S ribosomal protein L4</fullName>
    </alternativeName>
</protein>
<evidence type="ECO:0000255" key="1">
    <source>
        <dbReference type="HAMAP-Rule" id="MF_01328"/>
    </source>
</evidence>
<evidence type="ECO:0000256" key="2">
    <source>
        <dbReference type="SAM" id="MobiDB-lite"/>
    </source>
</evidence>
<evidence type="ECO:0000305" key="3"/>
<gene>
    <name evidence="1" type="primary">rplD</name>
    <name type="ordered locus">ECIAI1_3468</name>
</gene>
<comment type="function">
    <text evidence="1">One of the primary rRNA binding proteins, this protein initially binds near the 5'-end of the 23S rRNA. It is important during the early stages of 50S assembly. It makes multiple contacts with different domains of the 23S rRNA in the assembled 50S subunit and ribosome.</text>
</comment>
<comment type="function">
    <text evidence="1">Forms part of the polypeptide exit tunnel.</text>
</comment>
<comment type="subunit">
    <text evidence="1">Part of the 50S ribosomal subunit.</text>
</comment>
<comment type="similarity">
    <text evidence="1">Belongs to the universal ribosomal protein uL4 family.</text>
</comment>
<organism>
    <name type="scientific">Escherichia coli O8 (strain IAI1)</name>
    <dbReference type="NCBI Taxonomy" id="585034"/>
    <lineage>
        <taxon>Bacteria</taxon>
        <taxon>Pseudomonadati</taxon>
        <taxon>Pseudomonadota</taxon>
        <taxon>Gammaproteobacteria</taxon>
        <taxon>Enterobacterales</taxon>
        <taxon>Enterobacteriaceae</taxon>
        <taxon>Escherichia</taxon>
    </lineage>
</organism>
<accession>B7M1N3</accession>
<reference key="1">
    <citation type="journal article" date="2009" name="PLoS Genet.">
        <title>Organised genome dynamics in the Escherichia coli species results in highly diverse adaptive paths.</title>
        <authorList>
            <person name="Touchon M."/>
            <person name="Hoede C."/>
            <person name="Tenaillon O."/>
            <person name="Barbe V."/>
            <person name="Baeriswyl S."/>
            <person name="Bidet P."/>
            <person name="Bingen E."/>
            <person name="Bonacorsi S."/>
            <person name="Bouchier C."/>
            <person name="Bouvet O."/>
            <person name="Calteau A."/>
            <person name="Chiapello H."/>
            <person name="Clermont O."/>
            <person name="Cruveiller S."/>
            <person name="Danchin A."/>
            <person name="Diard M."/>
            <person name="Dossat C."/>
            <person name="Karoui M.E."/>
            <person name="Frapy E."/>
            <person name="Garry L."/>
            <person name="Ghigo J.M."/>
            <person name="Gilles A.M."/>
            <person name="Johnson J."/>
            <person name="Le Bouguenec C."/>
            <person name="Lescat M."/>
            <person name="Mangenot S."/>
            <person name="Martinez-Jehanne V."/>
            <person name="Matic I."/>
            <person name="Nassif X."/>
            <person name="Oztas S."/>
            <person name="Petit M.A."/>
            <person name="Pichon C."/>
            <person name="Rouy Z."/>
            <person name="Ruf C.S."/>
            <person name="Schneider D."/>
            <person name="Tourret J."/>
            <person name="Vacherie B."/>
            <person name="Vallenet D."/>
            <person name="Medigue C."/>
            <person name="Rocha E.P.C."/>
            <person name="Denamur E."/>
        </authorList>
    </citation>
    <scope>NUCLEOTIDE SEQUENCE [LARGE SCALE GENOMIC DNA]</scope>
    <source>
        <strain>IAI1</strain>
    </source>
</reference>
<sequence>MELVLKDAQSALTVSETTFGRDFNEALVHQVVVAYAAGARQGTRAQKTRAEVTGSGKKPWRQKGTGRARSGSIKSPIWRSGGVTFAARPQDHSQKVNKKMYRGALKSILSELVRQDRLIVVEKFSVEAPKTKLLAQKLKDMALEDVLIITGELDENLFLAARNLHKVDVRDATGIDPVSLIAFDKVVMTADAVKQVEEMLA</sequence>
<feature type="chain" id="PRO_1000142120" description="Large ribosomal subunit protein uL4">
    <location>
        <begin position="1"/>
        <end position="201"/>
    </location>
</feature>
<feature type="region of interest" description="Disordered" evidence="2">
    <location>
        <begin position="44"/>
        <end position="71"/>
    </location>
</feature>